<sequence>MTKLENPVLMATIGGAQGLRGEVRAKAYTADPTALGDYGLLHSTDGRSFEILEIREMKNVVVVRFRGINDRNAAEALNGLELYIERDNLPDEELEDDEFYYADLEGLEALDDKGVSYGTVTGVFDFGAGDLLELKGPGKRPVLIPFSEASVLEIDLEAGTLLIDPLAAGLVDDPELSQFTAGKPKKKK</sequence>
<evidence type="ECO:0000255" key="1">
    <source>
        <dbReference type="HAMAP-Rule" id="MF_00014"/>
    </source>
</evidence>
<evidence type="ECO:0000305" key="2"/>
<keyword id="KW-0143">Chaperone</keyword>
<keyword id="KW-0963">Cytoplasm</keyword>
<keyword id="KW-1185">Reference proteome</keyword>
<keyword id="KW-0690">Ribosome biogenesis</keyword>
<keyword id="KW-0698">rRNA processing</keyword>
<accession>Q2K381</accession>
<organism>
    <name type="scientific">Rhizobium etli (strain ATCC 51251 / DSM 11541 / JCM 21823 / NBRC 15573 / CFN 42)</name>
    <dbReference type="NCBI Taxonomy" id="347834"/>
    <lineage>
        <taxon>Bacteria</taxon>
        <taxon>Pseudomonadati</taxon>
        <taxon>Pseudomonadota</taxon>
        <taxon>Alphaproteobacteria</taxon>
        <taxon>Hyphomicrobiales</taxon>
        <taxon>Rhizobiaceae</taxon>
        <taxon>Rhizobium/Agrobacterium group</taxon>
        <taxon>Rhizobium</taxon>
    </lineage>
</organism>
<name>RIMM_RHIEC</name>
<proteinExistence type="inferred from homology"/>
<dbReference type="EMBL" id="CP000133">
    <property type="protein sequence ID" value="ABC92705.1"/>
    <property type="status" value="ALT_INIT"/>
    <property type="molecule type" value="Genomic_DNA"/>
</dbReference>
<dbReference type="RefSeq" id="WP_042119348.1">
    <property type="nucleotide sequence ID" value="NC_007761.1"/>
</dbReference>
<dbReference type="SMR" id="Q2K381"/>
<dbReference type="KEGG" id="ret:RHE_CH03960"/>
<dbReference type="eggNOG" id="COG0806">
    <property type="taxonomic scope" value="Bacteria"/>
</dbReference>
<dbReference type="HOGENOM" id="CLU_077636_0_1_5"/>
<dbReference type="OrthoDB" id="9788191at2"/>
<dbReference type="Proteomes" id="UP000001936">
    <property type="component" value="Chromosome"/>
</dbReference>
<dbReference type="GO" id="GO:0005737">
    <property type="term" value="C:cytoplasm"/>
    <property type="evidence" value="ECO:0007669"/>
    <property type="project" value="UniProtKB-SubCell"/>
</dbReference>
<dbReference type="GO" id="GO:0005840">
    <property type="term" value="C:ribosome"/>
    <property type="evidence" value="ECO:0007669"/>
    <property type="project" value="InterPro"/>
</dbReference>
<dbReference type="GO" id="GO:0043022">
    <property type="term" value="F:ribosome binding"/>
    <property type="evidence" value="ECO:0007669"/>
    <property type="project" value="InterPro"/>
</dbReference>
<dbReference type="GO" id="GO:0042274">
    <property type="term" value="P:ribosomal small subunit biogenesis"/>
    <property type="evidence" value="ECO:0007669"/>
    <property type="project" value="UniProtKB-UniRule"/>
</dbReference>
<dbReference type="GO" id="GO:0006364">
    <property type="term" value="P:rRNA processing"/>
    <property type="evidence" value="ECO:0007669"/>
    <property type="project" value="UniProtKB-UniRule"/>
</dbReference>
<dbReference type="Gene3D" id="2.30.30.240">
    <property type="entry name" value="PRC-barrel domain"/>
    <property type="match status" value="1"/>
</dbReference>
<dbReference type="Gene3D" id="2.40.30.60">
    <property type="entry name" value="RimM"/>
    <property type="match status" value="1"/>
</dbReference>
<dbReference type="HAMAP" id="MF_00014">
    <property type="entry name" value="Ribosome_mat_RimM"/>
    <property type="match status" value="1"/>
</dbReference>
<dbReference type="InterPro" id="IPR027275">
    <property type="entry name" value="PRC-brl_dom"/>
</dbReference>
<dbReference type="InterPro" id="IPR011033">
    <property type="entry name" value="PRC_barrel-like_sf"/>
</dbReference>
<dbReference type="InterPro" id="IPR011961">
    <property type="entry name" value="RimM"/>
</dbReference>
<dbReference type="InterPro" id="IPR002676">
    <property type="entry name" value="RimM_N"/>
</dbReference>
<dbReference type="InterPro" id="IPR036976">
    <property type="entry name" value="RimM_N_sf"/>
</dbReference>
<dbReference type="InterPro" id="IPR009000">
    <property type="entry name" value="Transl_B-barrel_sf"/>
</dbReference>
<dbReference type="NCBIfam" id="TIGR02273">
    <property type="entry name" value="16S_RimM"/>
    <property type="match status" value="1"/>
</dbReference>
<dbReference type="PANTHER" id="PTHR33692">
    <property type="entry name" value="RIBOSOME MATURATION FACTOR RIMM"/>
    <property type="match status" value="1"/>
</dbReference>
<dbReference type="PANTHER" id="PTHR33692:SF1">
    <property type="entry name" value="RIBOSOME MATURATION FACTOR RIMM"/>
    <property type="match status" value="1"/>
</dbReference>
<dbReference type="Pfam" id="PF05239">
    <property type="entry name" value="PRC"/>
    <property type="match status" value="1"/>
</dbReference>
<dbReference type="Pfam" id="PF01782">
    <property type="entry name" value="RimM"/>
    <property type="match status" value="1"/>
</dbReference>
<dbReference type="SUPFAM" id="SSF50346">
    <property type="entry name" value="PRC-barrel domain"/>
    <property type="match status" value="1"/>
</dbReference>
<dbReference type="SUPFAM" id="SSF50447">
    <property type="entry name" value="Translation proteins"/>
    <property type="match status" value="1"/>
</dbReference>
<feature type="chain" id="PRO_0000244155" description="Ribosome maturation factor RimM">
    <location>
        <begin position="1"/>
        <end position="188"/>
    </location>
</feature>
<feature type="domain" description="PRC barrel" evidence="1">
    <location>
        <begin position="96"/>
        <end position="169"/>
    </location>
</feature>
<gene>
    <name evidence="1" type="primary">rimM</name>
    <name type="ordered locus">RHE_CH03960</name>
</gene>
<reference key="1">
    <citation type="journal article" date="2006" name="Proc. Natl. Acad. Sci. U.S.A.">
        <title>The partitioned Rhizobium etli genome: genetic and metabolic redundancy in seven interacting replicons.</title>
        <authorList>
            <person name="Gonzalez V."/>
            <person name="Santamaria R.I."/>
            <person name="Bustos P."/>
            <person name="Hernandez-Gonzalez I."/>
            <person name="Medrano-Soto A."/>
            <person name="Moreno-Hagelsieb G."/>
            <person name="Janga S.C."/>
            <person name="Ramirez M.A."/>
            <person name="Jimenez-Jacinto V."/>
            <person name="Collado-Vides J."/>
            <person name="Davila G."/>
        </authorList>
    </citation>
    <scope>NUCLEOTIDE SEQUENCE [LARGE SCALE GENOMIC DNA]</scope>
    <source>
        <strain>ATCC 51251 / DSM 11541 / JCM 21823 / NBRC 15573 / CFN 42</strain>
    </source>
</reference>
<protein>
    <recommendedName>
        <fullName evidence="1">Ribosome maturation factor RimM</fullName>
    </recommendedName>
</protein>
<comment type="function">
    <text evidence="1">An accessory protein needed during the final step in the assembly of 30S ribosomal subunit, possibly for assembly of the head region. Essential for efficient processing of 16S rRNA. May be needed both before and after RbfA during the maturation of 16S rRNA. It has affinity for free ribosomal 30S subunits but not for 70S ribosomes.</text>
</comment>
<comment type="subunit">
    <text evidence="1">Binds ribosomal protein uS19.</text>
</comment>
<comment type="subcellular location">
    <subcellularLocation>
        <location evidence="1">Cytoplasm</location>
    </subcellularLocation>
</comment>
<comment type="domain">
    <text evidence="1">The PRC barrel domain binds ribosomal protein uS19.</text>
</comment>
<comment type="similarity">
    <text evidence="1">Belongs to the RimM family.</text>
</comment>
<comment type="sequence caution" evidence="2">
    <conflict type="erroneous initiation">
        <sequence resource="EMBL-CDS" id="ABC92705"/>
    </conflict>
</comment>